<accession>O02275</accession>
<name>SRE45_CAEEL</name>
<proteinExistence type="inferred from homology"/>
<organism>
    <name type="scientific">Caenorhabditis elegans</name>
    <dbReference type="NCBI Taxonomy" id="6239"/>
    <lineage>
        <taxon>Eukaryota</taxon>
        <taxon>Metazoa</taxon>
        <taxon>Ecdysozoa</taxon>
        <taxon>Nematoda</taxon>
        <taxon>Chromadorea</taxon>
        <taxon>Rhabditida</taxon>
        <taxon>Rhabditina</taxon>
        <taxon>Rhabditomorpha</taxon>
        <taxon>Rhabditoidea</taxon>
        <taxon>Rhabditidae</taxon>
        <taxon>Peloderinae</taxon>
        <taxon>Caenorhabditis</taxon>
    </lineage>
</organism>
<gene>
    <name type="primary">sre-45</name>
    <name type="ORF">F54F11.3</name>
</gene>
<comment type="subcellular location">
    <subcellularLocation>
        <location evidence="2">Membrane</location>
        <topology evidence="2">Multi-pass membrane protein</topology>
    </subcellularLocation>
</comment>
<comment type="similarity">
    <text evidence="2">Belongs to the nematode receptor-like protein sre family.</text>
</comment>
<keyword id="KW-0472">Membrane</keyword>
<keyword id="KW-1185">Reference proteome</keyword>
<keyword id="KW-0812">Transmembrane</keyword>
<keyword id="KW-1133">Transmembrane helix</keyword>
<dbReference type="EMBL" id="Z83229">
    <property type="protein sequence ID" value="CAB05740.3"/>
    <property type="molecule type" value="Genomic_DNA"/>
</dbReference>
<dbReference type="PIR" id="T22669">
    <property type="entry name" value="T22669"/>
</dbReference>
<dbReference type="RefSeq" id="NP_496843.2">
    <property type="nucleotide sequence ID" value="NM_064442.2"/>
</dbReference>
<dbReference type="FunCoup" id="O02275">
    <property type="interactions" value="9"/>
</dbReference>
<dbReference type="PaxDb" id="6239-F54F11.3"/>
<dbReference type="EnsemblMetazoa" id="F54F11.3.1">
    <property type="protein sequence ID" value="F54F11.3.1"/>
    <property type="gene ID" value="WBGene00010071"/>
</dbReference>
<dbReference type="GeneID" id="186258"/>
<dbReference type="KEGG" id="cel:CELE_F54F11.3"/>
<dbReference type="UCSC" id="F54F11.3">
    <property type="organism name" value="c. elegans"/>
</dbReference>
<dbReference type="AGR" id="WB:WBGene00010071"/>
<dbReference type="CTD" id="186258"/>
<dbReference type="WormBase" id="F54F11.3">
    <property type="protein sequence ID" value="CE32897"/>
    <property type="gene ID" value="WBGene00010071"/>
    <property type="gene designation" value="sre-45"/>
</dbReference>
<dbReference type="eggNOG" id="KOG0789">
    <property type="taxonomic scope" value="Eukaryota"/>
</dbReference>
<dbReference type="GeneTree" id="ENSGT00970000195947"/>
<dbReference type="HOGENOM" id="CLU_063305_1_0_1"/>
<dbReference type="InParanoid" id="O02275"/>
<dbReference type="OMA" id="GGFIKWH"/>
<dbReference type="OrthoDB" id="5838877at2759"/>
<dbReference type="PhylomeDB" id="O02275"/>
<dbReference type="PRO" id="PR:O02275"/>
<dbReference type="Proteomes" id="UP000001940">
    <property type="component" value="Chromosome II"/>
</dbReference>
<dbReference type="GO" id="GO:0016020">
    <property type="term" value="C:membrane"/>
    <property type="evidence" value="ECO:0007669"/>
    <property type="project" value="UniProtKB-SubCell"/>
</dbReference>
<dbReference type="GO" id="GO:0007606">
    <property type="term" value="P:sensory perception of chemical stimulus"/>
    <property type="evidence" value="ECO:0007669"/>
    <property type="project" value="InterPro"/>
</dbReference>
<dbReference type="InterPro" id="IPR004151">
    <property type="entry name" value="7TM_GPCR_serpentine_rcpt_Sre"/>
</dbReference>
<dbReference type="PANTHER" id="PTHR47631:SF3">
    <property type="entry name" value="SERPENTINE RECEPTOR CLASS EPSILON-45"/>
    <property type="match status" value="1"/>
</dbReference>
<dbReference type="PANTHER" id="PTHR47631">
    <property type="entry name" value="SERPENTINE RECEPTOR, CLASS E (EPSILON)-RELATED"/>
    <property type="match status" value="1"/>
</dbReference>
<dbReference type="Pfam" id="PF03125">
    <property type="entry name" value="Sre"/>
    <property type="match status" value="1"/>
</dbReference>
<reference key="1">
    <citation type="journal article" date="1998" name="Science">
        <title>Genome sequence of the nematode C. elegans: a platform for investigating biology.</title>
        <authorList>
            <consortium name="The C. elegans sequencing consortium"/>
        </authorList>
    </citation>
    <scope>NUCLEOTIDE SEQUENCE [LARGE SCALE GENOMIC DNA]</scope>
    <source>
        <strain>Bristol N2</strain>
    </source>
</reference>
<evidence type="ECO:0000255" key="1"/>
<evidence type="ECO:0000305" key="2"/>
<protein>
    <recommendedName>
        <fullName>Serpentine receptor class epsilon-45</fullName>
        <shortName>Protein sre-45</shortName>
    </recommendedName>
</protein>
<feature type="chain" id="PRO_0000104550" description="Serpentine receptor class epsilon-45">
    <location>
        <begin position="1"/>
        <end position="369"/>
    </location>
</feature>
<feature type="transmembrane region" description="Helical" evidence="1">
    <location>
        <begin position="1"/>
        <end position="21"/>
    </location>
</feature>
<feature type="transmembrane region" description="Helical" evidence="1">
    <location>
        <begin position="39"/>
        <end position="59"/>
    </location>
</feature>
<feature type="transmembrane region" description="Helical" evidence="1">
    <location>
        <begin position="67"/>
        <end position="87"/>
    </location>
</feature>
<feature type="transmembrane region" description="Helical" evidence="1">
    <location>
        <begin position="127"/>
        <end position="147"/>
    </location>
</feature>
<feature type="transmembrane region" description="Helical" evidence="1">
    <location>
        <begin position="169"/>
        <end position="191"/>
    </location>
</feature>
<feature type="transmembrane region" description="Helical" evidence="1">
    <location>
        <begin position="195"/>
        <end position="217"/>
    </location>
</feature>
<feature type="transmembrane region" description="Helical" evidence="1">
    <location>
        <begin position="258"/>
        <end position="278"/>
    </location>
</feature>
<feature type="transmembrane region" description="Helical" evidence="1">
    <location>
        <begin position="291"/>
        <end position="311"/>
    </location>
</feature>
<sequence length="369" mass="42428">MIFLIGNSTSNYTVCFPIFILEDTRALKFPYSMLQALEFVLTFVSFYYVIKCCYVAIHIKSFHRNLTVLLIILMIQWFEGLLSNILIKPYETGFWPLGEHNTQLKQWWTKDYSKMIQVPNLSTFPNFFLGGFLKWHYILSMITTLLVMSIERSFACYFLTDYEKKSRNGLFFMLVVGQTSTNLVMGYLFFFNAAHFAVGFSIILSTNIIAMGIFTYVKHVNRQVNRAIEDFSNPSLYCLPARFQVRENVRCFQMITKVIHAGLFLILTACFVNLFMYLELTPGLDPLLNLIFESAINLNPVVIVPTLLGSVNAWRNFTFSSGVCLGFKAQVRLKIIKVSSVSIGNDGAKSDRTRKETDAYFDQLNSAWI</sequence>